<gene>
    <name type="primary">TRIM5</name>
</gene>
<feature type="initiator methionine" description="Removed" evidence="3">
    <location>
        <position position="1"/>
    </location>
</feature>
<feature type="chain" id="PRO_0000273449" description="Tripartite motif-containing protein 5">
    <location>
        <begin position="2"/>
        <end position="547"/>
    </location>
</feature>
<feature type="domain" description="B30.2/SPRY" evidence="7">
    <location>
        <begin position="280"/>
        <end position="547"/>
    </location>
</feature>
<feature type="zinc finger region" description="RING-type" evidence="6">
    <location>
        <begin position="15"/>
        <end position="59"/>
    </location>
</feature>
<feature type="zinc finger region" description="B box-type" evidence="5">
    <location>
        <begin position="91"/>
        <end position="132"/>
    </location>
</feature>
<feature type="region of interest" description="Required for interaction with GABARAP and for autophagy" evidence="2">
    <location>
        <begin position="186"/>
        <end position="199"/>
    </location>
</feature>
<feature type="coiled-coil region" evidence="4">
    <location>
        <begin position="132"/>
        <end position="225"/>
    </location>
</feature>
<feature type="binding site" evidence="5">
    <location>
        <position position="96"/>
    </location>
    <ligand>
        <name>Zn(2+)</name>
        <dbReference type="ChEBI" id="CHEBI:29105"/>
    </ligand>
</feature>
<feature type="binding site" evidence="5">
    <location>
        <position position="99"/>
    </location>
    <ligand>
        <name>Zn(2+)</name>
        <dbReference type="ChEBI" id="CHEBI:29105"/>
    </ligand>
</feature>
<feature type="binding site" evidence="5">
    <location>
        <position position="118"/>
    </location>
    <ligand>
        <name>Zn(2+)</name>
        <dbReference type="ChEBI" id="CHEBI:29105"/>
    </ligand>
</feature>
<feature type="binding site" evidence="5">
    <location>
        <position position="124"/>
    </location>
    <ligand>
        <name>Zn(2+)</name>
        <dbReference type="ChEBI" id="CHEBI:29105"/>
    </ligand>
</feature>
<feature type="modified residue" description="N-acetylalanine" evidence="3">
    <location>
        <position position="2"/>
    </location>
</feature>
<feature type="modified residue" description="Phosphoserine" evidence="3">
    <location>
        <position position="86"/>
    </location>
</feature>
<feature type="sequence conflict" description="In Ref. 1; AAW72444." evidence="8" ref="1">
    <original>E</original>
    <variation>G</variation>
    <location>
        <position position="4"/>
    </location>
</feature>
<feature type="sequence conflict" description="In Ref. 1; AAW72444." evidence="8" ref="1">
    <original>E</original>
    <variation>K</variation>
    <location>
        <position position="88"/>
    </location>
</feature>
<feature type="sequence conflict" description="In Ref. 1; AAW72444." evidence="8" ref="1">
    <original>A</original>
    <variation>V</variation>
    <location>
        <position position="162"/>
    </location>
</feature>
<feature type="sequence conflict" description="In Ref. 1; AAW72444." evidence="8" ref="1">
    <original>E</original>
    <variation>G</variation>
    <location>
        <position position="291"/>
    </location>
</feature>
<feature type="sequence conflict" description="In Ref. 1; AAW72444." evidence="8" ref="1">
    <original>D</original>
    <variation>N</variation>
    <location>
        <position position="359"/>
    </location>
</feature>
<feature type="sequence conflict" description="In Ref. 1; AAW72444." evidence="8" ref="1">
    <original>T</original>
    <variation>A</variation>
    <location>
        <position position="486"/>
    </location>
</feature>
<protein>
    <recommendedName>
        <fullName>Tripartite motif-containing protein 5</fullName>
        <ecNumber>2.3.2.27</ecNumber>
    </recommendedName>
    <alternativeName>
        <fullName evidence="8">RING-type E3 ubiquitin transferase TRIM5</fullName>
    </alternativeName>
    <alternativeName>
        <fullName>TRIM5alpha</fullName>
    </alternativeName>
</protein>
<sequence>MASEILLNIKEEVTCPICLELLTEPLSLDCGHSFCQACITANHKESTLHQGERSCPLCRVSYQSENLRPNRHLANIAERLREVMLSPEEGQKVDRCARHGEKLLLFCQQHGNVICWLCERSQEHRGHSTFLVEEVAQKYQEKLQVALEMMRQKQQDAEKLEADVREEQASWKIQIENDKTNILAEFKQLRDILDCEESNELQNLEKEEENLLKTLAQSENDMVLQTQSMRVLIADLEHRLQGSVMELLQDVEGVIKRIKNVTLQKPKTFLNEKRRVFRAPDLKGMLQVFKELKEVQCYWAHVTLVPSHPSCTVISEDERQVRYQEQIHQPSVKVKYFCGVLGSPGFTSGKHYWEVDVSDKSAWILGVCVSLKCTANVPGIENYQPKNGYWVIGLQNANNYSAFQDAVPGTENYQPKNGNRRNKGLRNADNYSAFRDTFQPINDSWVTGLRNVDNYNAFQDAVKYSDFQDGSCSTPSAPLMVPLFMTICPKRVGVFLDCKACTVSFFNVTSNGCLIYKFSKCHFSYPVFPYFSPMICKLPMTLCSPSS</sequence>
<proteinExistence type="evidence at transcript level"/>
<reference key="1">
    <citation type="journal article" date="2005" name="J. Virol.">
        <title>The B30.2(SPRY) domain of the retroviral restriction factor TRIM5alpha exhibits lineage-specific length and sequence variation in primates.</title>
        <authorList>
            <person name="Song B."/>
            <person name="Gold B."/>
            <person name="O'Huigin C."/>
            <person name="Javanbakht H."/>
            <person name="Li X."/>
            <person name="Stremlau M."/>
            <person name="Winkler C."/>
            <person name="Dean M."/>
            <person name="Sodroski J."/>
        </authorList>
    </citation>
    <scope>NUCLEOTIDE SEQUENCE [MRNA]</scope>
</reference>
<reference key="2">
    <citation type="journal article" date="2005" name="Proc. Natl. Acad. Sci. U.S.A.">
        <title>Positive selection of primate TRIM5alpha identifies a critical species-specific retroviral restriction domain.</title>
        <authorList>
            <person name="Sawyer S.L."/>
            <person name="Wu L.I."/>
            <person name="Emerman M."/>
            <person name="Malik H.S."/>
        </authorList>
    </citation>
    <scope>NUCLEOTIDE SEQUENCE [GENOMIC DNA]</scope>
</reference>
<name>TRIM5_ATEGE</name>
<comment type="function">
    <text evidence="3">Capsid-specific restriction factor that prevents infection from non-host-adapted retroviruses. Blocks viral replication early in the life cycle, after viral entry but before reverse transcription. In addition to acting as a capsid-specific restriction factor, also acts as a pattern recognition receptor that activates innate immune signaling in response to the retroviral capsid lattice. Binding to the viral capsid triggers its E3 ubiquitin ligase activity, and in concert with the heterodimeric ubiquitin conjugating enzyme complex UBE2V1-UBE2N (also known as UBC13-UEV1A complex) generates 'Lys-63'-linked polyubiquitin chains, which in turn are catalysts in the autophosphorylation of the MAP3K7/TAK1 complex (includes TAK1, TAB2, and TAB3). Activation of the MAP3K7/TAK1 complex by autophosphorylation results in the induction and expression of NF-kappa-B and MAPK-responsive inflammatory genes, thereby leading to an innate immune response in the infected cell. Plays a role in regulating autophagy through activation of autophagy regulator BECN1 by causing its dissociation from its inhibitors BCL2 and TAB2.</text>
</comment>
<comment type="catalytic activity">
    <reaction>
        <text>S-ubiquitinyl-[E2 ubiquitin-conjugating enzyme]-L-cysteine + [acceptor protein]-L-lysine = [E2 ubiquitin-conjugating enzyme]-L-cysteine + N(6)-ubiquitinyl-[acceptor protein]-L-lysine.</text>
        <dbReference type="EC" id="2.3.2.27"/>
    </reaction>
</comment>
<comment type="pathway">
    <text>Protein modification; protein ubiquitination.</text>
</comment>
<comment type="subunit">
    <text evidence="2 3">Can form homodimers and homotrimers. In addition to lower-order dimerization, also exhibits a higher-order multimerization and both low- and high-order multimerizations are essential for its restriction activity. Interacts with BTBD1 and BTBD2. Interacts with PSMC4, PSMC5, PSMD7 and HSPA8/HSC70. Interacts (via B30.2/SPRY domain) with HSPA1A/B. Interacts with PSMC2, MAP3K7/TAK1, TAB2 and TAB3. Interacts with SQSTM1. Interacts with TRIM6 and TRIM34. Interacts with ULK1 (phosphorylated form), GABARAP, GABARAPL1, GABARAPL2, MAP1LC3A, MAP1LC3C and BECN1.</text>
</comment>
<comment type="subcellular location">
    <subcellularLocation>
        <location evidence="2">Cytoplasm</location>
    </subcellularLocation>
    <subcellularLocation>
        <location evidence="2">Nucleus</location>
    </subcellularLocation>
    <text evidence="2">Predominantly localizes in cytoplasmic bodies. Localization may be influenced by the coexpression of other TRIM proteins, hence partial nuclear localization is observed in the presence of TRIM22 or TRIM27. In cytoplasmic bodies, colocalizes with proteasomal subunits and SQSTM1.</text>
</comment>
<comment type="domain">
    <text evidence="2 3">The B box-type zinc finger domain and the coiled-coil domain contribute to the higher and low order multimerization respectively which is essential for restriction activity. The coiled coil domain is important for higher order multimerization by promoting the initial dimerization.</text>
</comment>
<comment type="domain">
    <text evidence="1">The B30.2/SPRY domain acts as a capsid recognition domain. Polymorphisms in this domain explain the observed species-specific differences among orthologs (By similarity).</text>
</comment>
<comment type="domain">
    <text evidence="1">The RING-type zinc finger domain confers E3 ubiquitin ligase activity and is essential for retrovirus restriction activity, autoubiquitination and higher-order multimerization.</text>
</comment>
<comment type="PTM">
    <text evidence="1">Degraded in a proteasome-independent fashion in the absence of viral infection but in a proteasome-dependent fashion following exposure to restriction sensitive virus.</text>
</comment>
<comment type="PTM">
    <text evidence="1">Autoubiquitinated in a RING finger- and UBE2D2-dependent manner. Monoubiquitinated by TRIM21. Deubiquitinated by Yersinia YopJ. Ubiquitination may not lead to proteasomal degradation (By similarity).</text>
</comment>
<comment type="similarity">
    <text evidence="8">Belongs to the TRIM/RBCC family.</text>
</comment>
<keyword id="KW-0007">Acetylation</keyword>
<keyword id="KW-0051">Antiviral defense</keyword>
<keyword id="KW-0072">Autophagy</keyword>
<keyword id="KW-0175">Coiled coil</keyword>
<keyword id="KW-0963">Cytoplasm</keyword>
<keyword id="KW-0391">Immunity</keyword>
<keyword id="KW-0399">Innate immunity</keyword>
<keyword id="KW-0479">Metal-binding</keyword>
<keyword id="KW-0539">Nucleus</keyword>
<keyword id="KW-0597">Phosphoprotein</keyword>
<keyword id="KW-0808">Transferase</keyword>
<keyword id="KW-0832">Ubl conjugation</keyword>
<keyword id="KW-0833">Ubl conjugation pathway</keyword>
<keyword id="KW-0862">Zinc</keyword>
<keyword id="KW-0863">Zinc-finger</keyword>
<dbReference type="EC" id="2.3.2.27"/>
<dbReference type="EMBL" id="AY740616">
    <property type="protein sequence ID" value="AAW72444.1"/>
    <property type="molecule type" value="mRNA"/>
</dbReference>
<dbReference type="EMBL" id="AY843516">
    <property type="protein sequence ID" value="AAV91987.1"/>
    <property type="molecule type" value="Genomic_DNA"/>
</dbReference>
<dbReference type="SMR" id="Q5D7I1"/>
<dbReference type="OrthoDB" id="654191at2759"/>
<dbReference type="UniPathway" id="UPA00143"/>
<dbReference type="GO" id="GO:0005634">
    <property type="term" value="C:nucleus"/>
    <property type="evidence" value="ECO:0007669"/>
    <property type="project" value="UniProtKB-SubCell"/>
</dbReference>
<dbReference type="GO" id="GO:0000932">
    <property type="term" value="C:P-body"/>
    <property type="evidence" value="ECO:0000250"/>
    <property type="project" value="UniProtKB"/>
</dbReference>
<dbReference type="GO" id="GO:0038187">
    <property type="term" value="F:pattern recognition receptor activity"/>
    <property type="evidence" value="ECO:0000250"/>
    <property type="project" value="UniProtKB"/>
</dbReference>
<dbReference type="GO" id="GO:0004842">
    <property type="term" value="F:ubiquitin-protein transferase activity"/>
    <property type="evidence" value="ECO:0000250"/>
    <property type="project" value="UniProtKB"/>
</dbReference>
<dbReference type="GO" id="GO:0008270">
    <property type="term" value="F:zinc ion binding"/>
    <property type="evidence" value="ECO:0007669"/>
    <property type="project" value="UniProtKB-KW"/>
</dbReference>
<dbReference type="GO" id="GO:0002218">
    <property type="term" value="P:activation of innate immune response"/>
    <property type="evidence" value="ECO:0000250"/>
    <property type="project" value="UniProtKB"/>
</dbReference>
<dbReference type="GO" id="GO:0006914">
    <property type="term" value="P:autophagy"/>
    <property type="evidence" value="ECO:0007669"/>
    <property type="project" value="UniProtKB-KW"/>
</dbReference>
<dbReference type="GO" id="GO:0051607">
    <property type="term" value="P:defense response to virus"/>
    <property type="evidence" value="ECO:0007669"/>
    <property type="project" value="UniProtKB-KW"/>
</dbReference>
<dbReference type="GO" id="GO:0045087">
    <property type="term" value="P:innate immune response"/>
    <property type="evidence" value="ECO:0007669"/>
    <property type="project" value="UniProtKB-KW"/>
</dbReference>
<dbReference type="GO" id="GO:0043123">
    <property type="term" value="P:positive regulation of canonical NF-kappaB signal transduction"/>
    <property type="evidence" value="ECO:0000250"/>
    <property type="project" value="UniProtKB"/>
</dbReference>
<dbReference type="GO" id="GO:0043410">
    <property type="term" value="P:positive regulation of MAPK cascade"/>
    <property type="evidence" value="ECO:0000250"/>
    <property type="project" value="UniProtKB"/>
</dbReference>
<dbReference type="GO" id="GO:0051092">
    <property type="term" value="P:positive regulation of NF-kappaB transcription factor activity"/>
    <property type="evidence" value="ECO:0000250"/>
    <property type="project" value="UniProtKB"/>
</dbReference>
<dbReference type="GO" id="GO:0070534">
    <property type="term" value="P:protein K63-linked ubiquitination"/>
    <property type="evidence" value="ECO:0000250"/>
    <property type="project" value="UniProtKB"/>
</dbReference>
<dbReference type="GO" id="GO:0031664">
    <property type="term" value="P:regulation of lipopolysaccharide-mediated signaling pathway"/>
    <property type="evidence" value="ECO:0000250"/>
    <property type="project" value="UniProtKB"/>
</dbReference>
<dbReference type="CDD" id="cd19761">
    <property type="entry name" value="Bbox2_TRIM5-like"/>
    <property type="match status" value="1"/>
</dbReference>
<dbReference type="CDD" id="cd16591">
    <property type="entry name" value="RING-HC_TRIM5-like_C-IV"/>
    <property type="match status" value="1"/>
</dbReference>
<dbReference type="FunFam" id="3.30.160.60:FF:000386">
    <property type="entry name" value="Tripartite motif-containing 5 (Predicted)"/>
    <property type="match status" value="1"/>
</dbReference>
<dbReference type="FunFam" id="3.30.40.10:FF:000144">
    <property type="entry name" value="Tripartite motif-containing 5 (Predicted)"/>
    <property type="match status" value="1"/>
</dbReference>
<dbReference type="FunFam" id="2.60.120.920:FF:000107">
    <property type="entry name" value="Tripartite motif-containing protein 5"/>
    <property type="match status" value="1"/>
</dbReference>
<dbReference type="FunFam" id="2.60.120.920:FF:000108">
    <property type="entry name" value="Tripartite motif-containing protein 5"/>
    <property type="match status" value="1"/>
</dbReference>
<dbReference type="Gene3D" id="2.60.120.920">
    <property type="match status" value="2"/>
</dbReference>
<dbReference type="Gene3D" id="3.30.160.60">
    <property type="entry name" value="Classic Zinc Finger"/>
    <property type="match status" value="1"/>
</dbReference>
<dbReference type="Gene3D" id="3.30.40.10">
    <property type="entry name" value="Zinc/RING finger domain, C3HC4 (zinc finger)"/>
    <property type="match status" value="1"/>
</dbReference>
<dbReference type="InterPro" id="IPR001870">
    <property type="entry name" value="B30.2/SPRY"/>
</dbReference>
<dbReference type="InterPro" id="IPR043136">
    <property type="entry name" value="B30.2/SPRY_sf"/>
</dbReference>
<dbReference type="InterPro" id="IPR003879">
    <property type="entry name" value="Butyrophylin_SPRY"/>
</dbReference>
<dbReference type="InterPro" id="IPR013320">
    <property type="entry name" value="ConA-like_dom_sf"/>
</dbReference>
<dbReference type="InterPro" id="IPR003877">
    <property type="entry name" value="SPRY_dom"/>
</dbReference>
<dbReference type="InterPro" id="IPR050143">
    <property type="entry name" value="TRIM/RBCC"/>
</dbReference>
<dbReference type="InterPro" id="IPR027370">
    <property type="entry name" value="Znf-RING_euk"/>
</dbReference>
<dbReference type="InterPro" id="IPR000315">
    <property type="entry name" value="Znf_B-box"/>
</dbReference>
<dbReference type="InterPro" id="IPR001841">
    <property type="entry name" value="Znf_RING"/>
</dbReference>
<dbReference type="InterPro" id="IPR013083">
    <property type="entry name" value="Znf_RING/FYVE/PHD"/>
</dbReference>
<dbReference type="InterPro" id="IPR017907">
    <property type="entry name" value="Znf_RING_CS"/>
</dbReference>
<dbReference type="PANTHER" id="PTHR24103">
    <property type="entry name" value="E3 UBIQUITIN-PROTEIN LIGASE TRIM"/>
    <property type="match status" value="1"/>
</dbReference>
<dbReference type="Pfam" id="PF00622">
    <property type="entry name" value="SPRY"/>
    <property type="match status" value="1"/>
</dbReference>
<dbReference type="Pfam" id="PF00643">
    <property type="entry name" value="zf-B_box"/>
    <property type="match status" value="1"/>
</dbReference>
<dbReference type="Pfam" id="PF13445">
    <property type="entry name" value="zf-RING_UBOX"/>
    <property type="match status" value="1"/>
</dbReference>
<dbReference type="PRINTS" id="PR01407">
    <property type="entry name" value="BUTYPHLNCDUF"/>
</dbReference>
<dbReference type="SMART" id="SM00336">
    <property type="entry name" value="BBOX"/>
    <property type="match status" value="1"/>
</dbReference>
<dbReference type="SMART" id="SM00184">
    <property type="entry name" value="RING"/>
    <property type="match status" value="1"/>
</dbReference>
<dbReference type="SMART" id="SM00449">
    <property type="entry name" value="SPRY"/>
    <property type="match status" value="1"/>
</dbReference>
<dbReference type="SUPFAM" id="SSF57845">
    <property type="entry name" value="B-box zinc-binding domain"/>
    <property type="match status" value="1"/>
</dbReference>
<dbReference type="SUPFAM" id="SSF49899">
    <property type="entry name" value="Concanavalin A-like lectins/glucanases"/>
    <property type="match status" value="2"/>
</dbReference>
<dbReference type="SUPFAM" id="SSF57850">
    <property type="entry name" value="RING/U-box"/>
    <property type="match status" value="1"/>
</dbReference>
<dbReference type="PROSITE" id="PS50188">
    <property type="entry name" value="B302_SPRY"/>
    <property type="match status" value="1"/>
</dbReference>
<dbReference type="PROSITE" id="PS50119">
    <property type="entry name" value="ZF_BBOX"/>
    <property type="match status" value="1"/>
</dbReference>
<dbReference type="PROSITE" id="PS00518">
    <property type="entry name" value="ZF_RING_1"/>
    <property type="match status" value="1"/>
</dbReference>
<dbReference type="PROSITE" id="PS50089">
    <property type="entry name" value="ZF_RING_2"/>
    <property type="match status" value="1"/>
</dbReference>
<accession>Q5D7I1</accession>
<accession>Q5C8U0</accession>
<organism>
    <name type="scientific">Ateles geoffroyi</name>
    <name type="common">Black-handed spider monkey</name>
    <name type="synonym">Geoffroy's spider monkey</name>
    <dbReference type="NCBI Taxonomy" id="9509"/>
    <lineage>
        <taxon>Eukaryota</taxon>
        <taxon>Metazoa</taxon>
        <taxon>Chordata</taxon>
        <taxon>Craniata</taxon>
        <taxon>Vertebrata</taxon>
        <taxon>Euteleostomi</taxon>
        <taxon>Mammalia</taxon>
        <taxon>Eutheria</taxon>
        <taxon>Euarchontoglires</taxon>
        <taxon>Primates</taxon>
        <taxon>Haplorrhini</taxon>
        <taxon>Platyrrhini</taxon>
        <taxon>Atelidae</taxon>
        <taxon>Atelinae</taxon>
        <taxon>Ateles</taxon>
    </lineage>
</organism>
<evidence type="ECO:0000250" key="1"/>
<evidence type="ECO:0000250" key="2">
    <source>
        <dbReference type="UniProtKB" id="Q0PF16"/>
    </source>
</evidence>
<evidence type="ECO:0000250" key="3">
    <source>
        <dbReference type="UniProtKB" id="Q9C035"/>
    </source>
</evidence>
<evidence type="ECO:0000255" key="4"/>
<evidence type="ECO:0000255" key="5">
    <source>
        <dbReference type="PROSITE-ProRule" id="PRU00024"/>
    </source>
</evidence>
<evidence type="ECO:0000255" key="6">
    <source>
        <dbReference type="PROSITE-ProRule" id="PRU00175"/>
    </source>
</evidence>
<evidence type="ECO:0000255" key="7">
    <source>
        <dbReference type="PROSITE-ProRule" id="PRU00548"/>
    </source>
</evidence>
<evidence type="ECO:0000305" key="8"/>